<keyword id="KW-1185">Reference proteome</keyword>
<keyword id="KW-0687">Ribonucleoprotein</keyword>
<keyword id="KW-0689">Ribosomal protein</keyword>
<comment type="similarity">
    <text evidence="2">Belongs to the bacterial ribosomal protein bL32 family.</text>
</comment>
<gene>
    <name type="primary">rpmF</name>
    <name type="ordered locus">aq_1102</name>
</gene>
<reference key="1">
    <citation type="journal article" date="1998" name="Nature">
        <title>The complete genome of the hyperthermophilic bacterium Aquifex aeolicus.</title>
        <authorList>
            <person name="Deckert G."/>
            <person name="Warren P.V."/>
            <person name="Gaasterland T."/>
            <person name="Young W.G."/>
            <person name="Lenox A.L."/>
            <person name="Graham D.E."/>
            <person name="Overbeek R."/>
            <person name="Snead M.A."/>
            <person name="Keller M."/>
            <person name="Aujay M."/>
            <person name="Huber R."/>
            <person name="Feldman R.A."/>
            <person name="Short J.M."/>
            <person name="Olsen G.J."/>
            <person name="Swanson R.V."/>
        </authorList>
    </citation>
    <scope>NUCLEOTIDE SEQUENCE [LARGE SCALE GENOMIC DNA]</scope>
    <source>
        <strain>VF5</strain>
    </source>
</reference>
<dbReference type="EMBL" id="AE000657">
    <property type="protein sequence ID" value="AAC07156.1"/>
    <property type="molecule type" value="Genomic_DNA"/>
</dbReference>
<dbReference type="PIR" id="H70394">
    <property type="entry name" value="H70394"/>
</dbReference>
<dbReference type="RefSeq" id="NP_213750.1">
    <property type="nucleotide sequence ID" value="NC_000918.1"/>
</dbReference>
<dbReference type="RefSeq" id="WP_010880688.1">
    <property type="nucleotide sequence ID" value="NC_000918.1"/>
</dbReference>
<dbReference type="SMR" id="O67187"/>
<dbReference type="STRING" id="224324.aq_1102"/>
<dbReference type="EnsemblBacteria" id="AAC07156">
    <property type="protein sequence ID" value="AAC07156"/>
    <property type="gene ID" value="aq_1102"/>
</dbReference>
<dbReference type="KEGG" id="aae:aq_1102"/>
<dbReference type="PATRIC" id="fig|224324.8.peg.859"/>
<dbReference type="eggNOG" id="COG0333">
    <property type="taxonomic scope" value="Bacteria"/>
</dbReference>
<dbReference type="HOGENOM" id="CLU_129084_1_3_0"/>
<dbReference type="InParanoid" id="O67187"/>
<dbReference type="OrthoDB" id="9812874at2"/>
<dbReference type="Proteomes" id="UP000000798">
    <property type="component" value="Chromosome"/>
</dbReference>
<dbReference type="GO" id="GO:0015934">
    <property type="term" value="C:large ribosomal subunit"/>
    <property type="evidence" value="ECO:0007669"/>
    <property type="project" value="InterPro"/>
</dbReference>
<dbReference type="GO" id="GO:0003735">
    <property type="term" value="F:structural constituent of ribosome"/>
    <property type="evidence" value="ECO:0000318"/>
    <property type="project" value="GO_Central"/>
</dbReference>
<dbReference type="GO" id="GO:0006412">
    <property type="term" value="P:translation"/>
    <property type="evidence" value="ECO:0007669"/>
    <property type="project" value="UniProtKB-UniRule"/>
</dbReference>
<dbReference type="Gene3D" id="1.20.5.640">
    <property type="entry name" value="Single helix bin"/>
    <property type="match status" value="1"/>
</dbReference>
<dbReference type="HAMAP" id="MF_00340">
    <property type="entry name" value="Ribosomal_bL32"/>
    <property type="match status" value="1"/>
</dbReference>
<dbReference type="InterPro" id="IPR002677">
    <property type="entry name" value="Ribosomal_bL32"/>
</dbReference>
<dbReference type="InterPro" id="IPR044957">
    <property type="entry name" value="Ribosomal_bL32_bact"/>
</dbReference>
<dbReference type="InterPro" id="IPR011332">
    <property type="entry name" value="Ribosomal_zn-bd"/>
</dbReference>
<dbReference type="NCBIfam" id="TIGR01031">
    <property type="entry name" value="rpmF_bact"/>
    <property type="match status" value="1"/>
</dbReference>
<dbReference type="PANTHER" id="PTHR35534">
    <property type="entry name" value="50S RIBOSOMAL PROTEIN L32"/>
    <property type="match status" value="1"/>
</dbReference>
<dbReference type="PANTHER" id="PTHR35534:SF1">
    <property type="entry name" value="LARGE RIBOSOMAL SUBUNIT PROTEIN BL32"/>
    <property type="match status" value="1"/>
</dbReference>
<dbReference type="Pfam" id="PF01783">
    <property type="entry name" value="Ribosomal_L32p"/>
    <property type="match status" value="1"/>
</dbReference>
<dbReference type="SUPFAM" id="SSF57829">
    <property type="entry name" value="Zn-binding ribosomal proteins"/>
    <property type="match status" value="1"/>
</dbReference>
<proteinExistence type="inferred from homology"/>
<feature type="initiator methionine" description="Removed" evidence="1">
    <location>
        <position position="1"/>
    </location>
</feature>
<feature type="chain" id="PRO_0000172300" description="Large ribosomal subunit protein bL32">
    <location>
        <begin position="2"/>
        <end position="63"/>
    </location>
</feature>
<sequence>MAVPKAKTSKWRRNQRRAQNFFNKFRRSLPSLSVCSNCGERIIPHRVCPYCGHYKGKEVIETE</sequence>
<protein>
    <recommendedName>
        <fullName evidence="2">Large ribosomal subunit protein bL32</fullName>
    </recommendedName>
    <alternativeName>
        <fullName>50S ribosomal protein L32</fullName>
    </alternativeName>
</protein>
<evidence type="ECO:0000250" key="1"/>
<evidence type="ECO:0000305" key="2"/>
<organism>
    <name type="scientific">Aquifex aeolicus (strain VF5)</name>
    <dbReference type="NCBI Taxonomy" id="224324"/>
    <lineage>
        <taxon>Bacteria</taxon>
        <taxon>Pseudomonadati</taxon>
        <taxon>Aquificota</taxon>
        <taxon>Aquificia</taxon>
        <taxon>Aquificales</taxon>
        <taxon>Aquificaceae</taxon>
        <taxon>Aquifex</taxon>
    </lineage>
</organism>
<accession>O67187</accession>
<name>RL32_AQUAE</name>